<accession>A6MMP1</accession>
<feature type="chain" id="PRO_0000344758" description="Large ribosomal subunit protein bL36c">
    <location>
        <begin position="1"/>
        <end position="37"/>
    </location>
</feature>
<comment type="subcellular location">
    <subcellularLocation>
        <location>Plastid</location>
        <location>Chloroplast</location>
    </subcellularLocation>
</comment>
<comment type="similarity">
    <text evidence="1">Belongs to the bacterial ribosomal protein bL36 family.</text>
</comment>
<evidence type="ECO:0000255" key="1">
    <source>
        <dbReference type="HAMAP-Rule" id="MF_00251"/>
    </source>
</evidence>
<evidence type="ECO:0000305" key="2"/>
<reference key="1">
    <citation type="journal article" date="2007" name="Mol. Phylogenet. Evol.">
        <title>Phylogenetic and evolutionary implications of complete chloroplast genome sequences of four early-diverging angiosperms: Buxus (Buxaceae), Chloranthus (Chloranthaceae), Dioscorea (Dioscoreaceae), and Illicium (Schisandraceae).</title>
        <authorList>
            <person name="Hansen D.R."/>
            <person name="Dastidar S.G."/>
            <person name="Cai Z."/>
            <person name="Penaflor C."/>
            <person name="Kuehl J.V."/>
            <person name="Boore J.L."/>
            <person name="Jansen R.K."/>
        </authorList>
    </citation>
    <scope>NUCLEOTIDE SEQUENCE [LARGE SCALE GENOMIC DNA]</scope>
</reference>
<protein>
    <recommendedName>
        <fullName evidence="1">Large ribosomal subunit protein bL36c</fullName>
    </recommendedName>
    <alternativeName>
        <fullName evidence="2">50S ribosomal protein L36, chloroplastic</fullName>
    </alternativeName>
</protein>
<organism>
    <name type="scientific">Dioscorea elephantipes</name>
    <name type="common">Elephant's foot yam</name>
    <name type="synonym">Testudinaria elephantipes</name>
    <dbReference type="NCBI Taxonomy" id="145284"/>
    <lineage>
        <taxon>Eukaryota</taxon>
        <taxon>Viridiplantae</taxon>
        <taxon>Streptophyta</taxon>
        <taxon>Embryophyta</taxon>
        <taxon>Tracheophyta</taxon>
        <taxon>Spermatophyta</taxon>
        <taxon>Magnoliopsida</taxon>
        <taxon>Liliopsida</taxon>
        <taxon>Dioscoreales</taxon>
        <taxon>Dioscoreaceae</taxon>
        <taxon>Dioscorea</taxon>
    </lineage>
</organism>
<geneLocation type="chloroplast"/>
<sequence length="37" mass="4478">MKIRASVRKICEKCRLIRRRGRIMVICSNPRHKQRQG</sequence>
<dbReference type="EMBL" id="EF380353">
    <property type="protein sequence ID" value="ABR01463.1"/>
    <property type="molecule type" value="Genomic_DNA"/>
</dbReference>
<dbReference type="RefSeq" id="YP_001294386.1">
    <property type="nucleotide sequence ID" value="NC_009601.1"/>
</dbReference>
<dbReference type="SMR" id="A6MMP1"/>
<dbReference type="GeneID" id="5236586"/>
<dbReference type="GO" id="GO:0009507">
    <property type="term" value="C:chloroplast"/>
    <property type="evidence" value="ECO:0007669"/>
    <property type="project" value="UniProtKB-SubCell"/>
</dbReference>
<dbReference type="GO" id="GO:1990904">
    <property type="term" value="C:ribonucleoprotein complex"/>
    <property type="evidence" value="ECO:0007669"/>
    <property type="project" value="UniProtKB-KW"/>
</dbReference>
<dbReference type="GO" id="GO:0005840">
    <property type="term" value="C:ribosome"/>
    <property type="evidence" value="ECO:0007669"/>
    <property type="project" value="UniProtKB-KW"/>
</dbReference>
<dbReference type="GO" id="GO:0003735">
    <property type="term" value="F:structural constituent of ribosome"/>
    <property type="evidence" value="ECO:0007669"/>
    <property type="project" value="InterPro"/>
</dbReference>
<dbReference type="GO" id="GO:0006412">
    <property type="term" value="P:translation"/>
    <property type="evidence" value="ECO:0007669"/>
    <property type="project" value="UniProtKB-UniRule"/>
</dbReference>
<dbReference type="HAMAP" id="MF_00251">
    <property type="entry name" value="Ribosomal_bL36"/>
    <property type="match status" value="1"/>
</dbReference>
<dbReference type="InterPro" id="IPR000473">
    <property type="entry name" value="Ribosomal_bL36"/>
</dbReference>
<dbReference type="InterPro" id="IPR035977">
    <property type="entry name" value="Ribosomal_bL36_sp"/>
</dbReference>
<dbReference type="NCBIfam" id="TIGR01022">
    <property type="entry name" value="rpmJ_bact"/>
    <property type="match status" value="1"/>
</dbReference>
<dbReference type="PANTHER" id="PTHR42888">
    <property type="entry name" value="50S RIBOSOMAL PROTEIN L36, CHLOROPLASTIC"/>
    <property type="match status" value="1"/>
</dbReference>
<dbReference type="PANTHER" id="PTHR42888:SF1">
    <property type="entry name" value="LARGE RIBOSOMAL SUBUNIT PROTEIN BL36C"/>
    <property type="match status" value="1"/>
</dbReference>
<dbReference type="Pfam" id="PF00444">
    <property type="entry name" value="Ribosomal_L36"/>
    <property type="match status" value="1"/>
</dbReference>
<dbReference type="SUPFAM" id="SSF57840">
    <property type="entry name" value="Ribosomal protein L36"/>
    <property type="match status" value="1"/>
</dbReference>
<dbReference type="PROSITE" id="PS00828">
    <property type="entry name" value="RIBOSOMAL_L36"/>
    <property type="match status" value="1"/>
</dbReference>
<name>RK36_DIOEL</name>
<proteinExistence type="inferred from homology"/>
<gene>
    <name evidence="1" type="primary">rpl36</name>
</gene>
<keyword id="KW-0150">Chloroplast</keyword>
<keyword id="KW-0934">Plastid</keyword>
<keyword id="KW-0687">Ribonucleoprotein</keyword>
<keyword id="KW-0689">Ribosomal protein</keyword>